<sequence>MTDAPVSRIRNFCIIAHIDHGKSTLADRLLQDTGTVANRDMQEQFLDNMELERERGITIKLQAARMNYTAADGEQYVLNLIDTPGHVDFSYEVSRSLLACEGALLVVDASQGVEAQTLANVYLALENDLEIIPVLNKIDLPGADPDRIKEEVEAIIGLDCSNAIYCSAKTGLGVPEILQAVVDRVPAPADAVEEPTKALIFDSYYDPYRGVIVYFRVMSGRISCKDKVLLMASKKTYELDEIGIMAPNERKVEELHAGEVGYLAASIKAVADARVGDTITLFNAPADEELPGYAEAKPMVFCGLFPTEADQYPDLREALHKLQLSDAALKFEPETSSAMGFGFRCGFLGLLHMEIVQERLEREYDLDLIVTAPSVIYNVNMVDGSEELVDNPATLPDPQKRESIEEPYVRMEIFAPNDYNGALMGLCQERRGEYIDMKYITKDRVTLIYELPLAEVVTDFFDQMKTRTQGYASMEYHLIGYRKNQLVRLDVLINGDRADPLTTIVHQDKAYNVGKALVDKLKELIPRQQFKIPLQASIGSRIIASTSISAIRKDVLAKCYGGDISRKKKLLKKQAKGKKRMKAMGKVDVPQEAFMAVLKLND</sequence>
<evidence type="ECO:0000255" key="1">
    <source>
        <dbReference type="HAMAP-Rule" id="MF_00071"/>
    </source>
</evidence>
<organism>
    <name type="scientific">Synechococcus sp. (strain CC9902)</name>
    <dbReference type="NCBI Taxonomy" id="316279"/>
    <lineage>
        <taxon>Bacteria</taxon>
        <taxon>Bacillati</taxon>
        <taxon>Cyanobacteriota</taxon>
        <taxon>Cyanophyceae</taxon>
        <taxon>Synechococcales</taxon>
        <taxon>Synechococcaceae</taxon>
        <taxon>Synechococcus</taxon>
    </lineage>
</organism>
<keyword id="KW-0997">Cell inner membrane</keyword>
<keyword id="KW-1003">Cell membrane</keyword>
<keyword id="KW-0342">GTP-binding</keyword>
<keyword id="KW-0378">Hydrolase</keyword>
<keyword id="KW-0472">Membrane</keyword>
<keyword id="KW-0547">Nucleotide-binding</keyword>
<keyword id="KW-0648">Protein biosynthesis</keyword>
<keyword id="KW-1185">Reference proteome</keyword>
<dbReference type="EC" id="3.6.5.n1" evidence="1"/>
<dbReference type="EMBL" id="CP000097">
    <property type="protein sequence ID" value="ABB26540.1"/>
    <property type="molecule type" value="Genomic_DNA"/>
</dbReference>
<dbReference type="RefSeq" id="WP_011360357.1">
    <property type="nucleotide sequence ID" value="NC_007513.1"/>
</dbReference>
<dbReference type="SMR" id="Q3AWX3"/>
<dbReference type="STRING" id="316279.Syncc9902_1582"/>
<dbReference type="KEGG" id="sye:Syncc9902_1582"/>
<dbReference type="eggNOG" id="COG0481">
    <property type="taxonomic scope" value="Bacteria"/>
</dbReference>
<dbReference type="HOGENOM" id="CLU_009995_3_3_3"/>
<dbReference type="OrthoDB" id="580826at2"/>
<dbReference type="Proteomes" id="UP000002712">
    <property type="component" value="Chromosome"/>
</dbReference>
<dbReference type="GO" id="GO:0005886">
    <property type="term" value="C:plasma membrane"/>
    <property type="evidence" value="ECO:0007669"/>
    <property type="project" value="UniProtKB-SubCell"/>
</dbReference>
<dbReference type="GO" id="GO:0005525">
    <property type="term" value="F:GTP binding"/>
    <property type="evidence" value="ECO:0007669"/>
    <property type="project" value="UniProtKB-KW"/>
</dbReference>
<dbReference type="GO" id="GO:0003924">
    <property type="term" value="F:GTPase activity"/>
    <property type="evidence" value="ECO:0007669"/>
    <property type="project" value="InterPro"/>
</dbReference>
<dbReference type="GO" id="GO:0043022">
    <property type="term" value="F:ribosome binding"/>
    <property type="evidence" value="ECO:0007669"/>
    <property type="project" value="TreeGrafter"/>
</dbReference>
<dbReference type="GO" id="GO:0045727">
    <property type="term" value="P:positive regulation of translation"/>
    <property type="evidence" value="ECO:0007669"/>
    <property type="project" value="TreeGrafter"/>
</dbReference>
<dbReference type="GO" id="GO:0006412">
    <property type="term" value="P:translation"/>
    <property type="evidence" value="ECO:0007669"/>
    <property type="project" value="UniProtKB-KW"/>
</dbReference>
<dbReference type="CDD" id="cd03699">
    <property type="entry name" value="EF4_II"/>
    <property type="match status" value="1"/>
</dbReference>
<dbReference type="CDD" id="cd16260">
    <property type="entry name" value="EF4_III"/>
    <property type="match status" value="1"/>
</dbReference>
<dbReference type="CDD" id="cd01890">
    <property type="entry name" value="LepA"/>
    <property type="match status" value="1"/>
</dbReference>
<dbReference type="CDD" id="cd03709">
    <property type="entry name" value="lepA_C"/>
    <property type="match status" value="1"/>
</dbReference>
<dbReference type="FunFam" id="3.40.50.300:FF:000078">
    <property type="entry name" value="Elongation factor 4"/>
    <property type="match status" value="1"/>
</dbReference>
<dbReference type="FunFam" id="2.40.30.10:FF:000015">
    <property type="entry name" value="Translation factor GUF1, mitochondrial"/>
    <property type="match status" value="1"/>
</dbReference>
<dbReference type="FunFam" id="3.30.70.240:FF:000007">
    <property type="entry name" value="Translation factor GUF1, mitochondrial"/>
    <property type="match status" value="1"/>
</dbReference>
<dbReference type="FunFam" id="3.30.70.2570:FF:000001">
    <property type="entry name" value="Translation factor GUF1, mitochondrial"/>
    <property type="match status" value="1"/>
</dbReference>
<dbReference type="FunFam" id="3.30.70.870:FF:000004">
    <property type="entry name" value="Translation factor GUF1, mitochondrial"/>
    <property type="match status" value="1"/>
</dbReference>
<dbReference type="Gene3D" id="3.30.70.240">
    <property type="match status" value="1"/>
</dbReference>
<dbReference type="Gene3D" id="3.30.70.2570">
    <property type="entry name" value="Elongation factor 4, C-terminal domain"/>
    <property type="match status" value="1"/>
</dbReference>
<dbReference type="Gene3D" id="3.30.70.870">
    <property type="entry name" value="Elongation Factor G (Translational Gtpase), domain 3"/>
    <property type="match status" value="1"/>
</dbReference>
<dbReference type="Gene3D" id="3.40.50.300">
    <property type="entry name" value="P-loop containing nucleotide triphosphate hydrolases"/>
    <property type="match status" value="1"/>
</dbReference>
<dbReference type="Gene3D" id="2.40.30.10">
    <property type="entry name" value="Translation factors"/>
    <property type="match status" value="1"/>
</dbReference>
<dbReference type="HAMAP" id="MF_03138">
    <property type="entry name" value="GUFP"/>
    <property type="match status" value="1"/>
</dbReference>
<dbReference type="HAMAP" id="MF_00071">
    <property type="entry name" value="LepA"/>
    <property type="match status" value="1"/>
</dbReference>
<dbReference type="InterPro" id="IPR006297">
    <property type="entry name" value="EF-4"/>
</dbReference>
<dbReference type="InterPro" id="IPR035647">
    <property type="entry name" value="EFG_III/V"/>
</dbReference>
<dbReference type="InterPro" id="IPR000640">
    <property type="entry name" value="EFG_V-like"/>
</dbReference>
<dbReference type="InterPro" id="IPR004161">
    <property type="entry name" value="EFTu-like_2"/>
</dbReference>
<dbReference type="InterPro" id="IPR031157">
    <property type="entry name" value="G_TR_CS"/>
</dbReference>
<dbReference type="InterPro" id="IPR027518">
    <property type="entry name" value="GUFP"/>
</dbReference>
<dbReference type="InterPro" id="IPR038363">
    <property type="entry name" value="LepA_C_sf"/>
</dbReference>
<dbReference type="InterPro" id="IPR013842">
    <property type="entry name" value="LepA_CTD"/>
</dbReference>
<dbReference type="InterPro" id="IPR035654">
    <property type="entry name" value="LepA_IV"/>
</dbReference>
<dbReference type="InterPro" id="IPR027417">
    <property type="entry name" value="P-loop_NTPase"/>
</dbReference>
<dbReference type="InterPro" id="IPR005225">
    <property type="entry name" value="Small_GTP-bd"/>
</dbReference>
<dbReference type="InterPro" id="IPR000795">
    <property type="entry name" value="T_Tr_GTP-bd_dom"/>
</dbReference>
<dbReference type="InterPro" id="IPR009000">
    <property type="entry name" value="Transl_B-barrel_sf"/>
</dbReference>
<dbReference type="NCBIfam" id="TIGR01393">
    <property type="entry name" value="lepA"/>
    <property type="match status" value="1"/>
</dbReference>
<dbReference type="NCBIfam" id="TIGR00231">
    <property type="entry name" value="small_GTP"/>
    <property type="match status" value="1"/>
</dbReference>
<dbReference type="PANTHER" id="PTHR43512:SF4">
    <property type="entry name" value="TRANSLATION FACTOR GUF1 HOMOLOG, CHLOROPLASTIC"/>
    <property type="match status" value="1"/>
</dbReference>
<dbReference type="PANTHER" id="PTHR43512">
    <property type="entry name" value="TRANSLATION FACTOR GUF1-RELATED"/>
    <property type="match status" value="1"/>
</dbReference>
<dbReference type="Pfam" id="PF00679">
    <property type="entry name" value="EFG_C"/>
    <property type="match status" value="1"/>
</dbReference>
<dbReference type="Pfam" id="PF00009">
    <property type="entry name" value="GTP_EFTU"/>
    <property type="match status" value="1"/>
</dbReference>
<dbReference type="Pfam" id="PF03144">
    <property type="entry name" value="GTP_EFTU_D2"/>
    <property type="match status" value="1"/>
</dbReference>
<dbReference type="Pfam" id="PF06421">
    <property type="entry name" value="LepA_C"/>
    <property type="match status" value="1"/>
</dbReference>
<dbReference type="PRINTS" id="PR00315">
    <property type="entry name" value="ELONGATNFCT"/>
</dbReference>
<dbReference type="SMART" id="SM00838">
    <property type="entry name" value="EFG_C"/>
    <property type="match status" value="1"/>
</dbReference>
<dbReference type="SUPFAM" id="SSF54980">
    <property type="entry name" value="EF-G C-terminal domain-like"/>
    <property type="match status" value="2"/>
</dbReference>
<dbReference type="SUPFAM" id="SSF52540">
    <property type="entry name" value="P-loop containing nucleoside triphosphate hydrolases"/>
    <property type="match status" value="1"/>
</dbReference>
<dbReference type="SUPFAM" id="SSF50447">
    <property type="entry name" value="Translation proteins"/>
    <property type="match status" value="1"/>
</dbReference>
<dbReference type="PROSITE" id="PS00301">
    <property type="entry name" value="G_TR_1"/>
    <property type="match status" value="1"/>
</dbReference>
<dbReference type="PROSITE" id="PS51722">
    <property type="entry name" value="G_TR_2"/>
    <property type="match status" value="1"/>
</dbReference>
<reference key="1">
    <citation type="submission" date="2005-08" db="EMBL/GenBank/DDBJ databases">
        <title>Complete sequence of Synechococcus sp. CC9902.</title>
        <authorList>
            <person name="Copeland A."/>
            <person name="Lucas S."/>
            <person name="Lapidus A."/>
            <person name="Barry K."/>
            <person name="Detter J.C."/>
            <person name="Glavina T."/>
            <person name="Hammon N."/>
            <person name="Israni S."/>
            <person name="Pitluck S."/>
            <person name="Martinez M."/>
            <person name="Schmutz J."/>
            <person name="Larimer F."/>
            <person name="Land M."/>
            <person name="Kyrpides N."/>
            <person name="Ivanova N."/>
            <person name="Richardson P."/>
        </authorList>
    </citation>
    <scope>NUCLEOTIDE SEQUENCE [LARGE SCALE GENOMIC DNA]</scope>
    <source>
        <strain>CC9902</strain>
    </source>
</reference>
<name>LEPA_SYNS9</name>
<feature type="chain" id="PRO_0000265716" description="Elongation factor 4">
    <location>
        <begin position="1"/>
        <end position="602"/>
    </location>
</feature>
<feature type="domain" description="tr-type G">
    <location>
        <begin position="7"/>
        <end position="189"/>
    </location>
</feature>
<feature type="binding site" evidence="1">
    <location>
        <begin position="19"/>
        <end position="24"/>
    </location>
    <ligand>
        <name>GTP</name>
        <dbReference type="ChEBI" id="CHEBI:37565"/>
    </ligand>
</feature>
<feature type="binding site" evidence="1">
    <location>
        <begin position="136"/>
        <end position="139"/>
    </location>
    <ligand>
        <name>GTP</name>
        <dbReference type="ChEBI" id="CHEBI:37565"/>
    </ligand>
</feature>
<protein>
    <recommendedName>
        <fullName evidence="1">Elongation factor 4</fullName>
        <shortName evidence="1">EF-4</shortName>
        <ecNumber evidence="1">3.6.5.n1</ecNumber>
    </recommendedName>
    <alternativeName>
        <fullName evidence="1">Ribosomal back-translocase LepA</fullName>
    </alternativeName>
</protein>
<gene>
    <name evidence="1" type="primary">lepA</name>
    <name type="ordered locus">Syncc9902_1582</name>
</gene>
<proteinExistence type="inferred from homology"/>
<comment type="function">
    <text evidence="1">Required for accurate and efficient protein synthesis under certain stress conditions. May act as a fidelity factor of the translation reaction, by catalyzing a one-codon backward translocation of tRNAs on improperly translocated ribosomes. Back-translocation proceeds from a post-translocation (POST) complex to a pre-translocation (PRE) complex, thus giving elongation factor G a second chance to translocate the tRNAs correctly. Binds to ribosomes in a GTP-dependent manner.</text>
</comment>
<comment type="catalytic activity">
    <reaction evidence="1">
        <text>GTP + H2O = GDP + phosphate + H(+)</text>
        <dbReference type="Rhea" id="RHEA:19669"/>
        <dbReference type="ChEBI" id="CHEBI:15377"/>
        <dbReference type="ChEBI" id="CHEBI:15378"/>
        <dbReference type="ChEBI" id="CHEBI:37565"/>
        <dbReference type="ChEBI" id="CHEBI:43474"/>
        <dbReference type="ChEBI" id="CHEBI:58189"/>
        <dbReference type="EC" id="3.6.5.n1"/>
    </reaction>
</comment>
<comment type="subcellular location">
    <subcellularLocation>
        <location evidence="1">Cell inner membrane</location>
        <topology evidence="1">Peripheral membrane protein</topology>
        <orientation evidence="1">Cytoplasmic side</orientation>
    </subcellularLocation>
</comment>
<comment type="similarity">
    <text evidence="1">Belongs to the TRAFAC class translation factor GTPase superfamily. Classic translation factor GTPase family. LepA subfamily.</text>
</comment>
<accession>Q3AWX3</accession>